<evidence type="ECO:0000250" key="1"/>
<evidence type="ECO:0000255" key="2"/>
<evidence type="ECO:0000305" key="3"/>
<reference key="1">
    <citation type="submission" date="2006-10" db="EMBL/GenBank/DDBJ databases">
        <authorList>
            <person name="Fleischmann R.D."/>
            <person name="Dodson R.J."/>
            <person name="Haft D.H."/>
            <person name="Merkel J.S."/>
            <person name="Nelson W.C."/>
            <person name="Fraser C.M."/>
        </authorList>
    </citation>
    <scope>NUCLEOTIDE SEQUENCE [LARGE SCALE GENOMIC DNA]</scope>
    <source>
        <strain>104</strain>
    </source>
</reference>
<proteinExistence type="inferred from homology"/>
<sequence length="446" mass="48479">MSTFIGQLVGFAAIVFLVVRYVVPPVRRLMAARQEAVRQQLQDAAAAADRLTESTTAHSKAVEAAKAESKRVVDEAQADAKRITEQLAAQAGLEAERIKSQGSRQVDLLRTQLTRQLRLELGHEAVRQAGELVRNYVADPAQQSATVDRFLDDLDAMAPAAADVQYPLMTKMRSSSRVALVNLTERFTTVAKDLDNKALSALSSELVSVAQMLDREIVVTRYLTVPAEDAGPRVRLIERLLSGKVGDVTLEVLRAAVSERWSANSDLIDALEHLSRQALLEVAERENKVDEVEEQLFRFSRILDVQPRLAILLGDYAVPVEGRVGLLRKVLDSASITVNPIVAALLTQTVELLRGRPAEEAVQFLAEVAVARRGEVVAQVSAAADLSGAQRSRLTEVLSRIYGHPVSVQLQIDTELLGGLLIAVADEVIDGTLASRLAAAEAQLPD</sequence>
<name>ATPFD_MYCA1</name>
<accession>A0QCX5</accession>
<comment type="function">
    <text evidence="1">F(1)F(0) ATP synthase produces ATP from ADP in the presence of a proton or sodium gradient. F-type ATPases consist of two structural domains, F(1) containing the extramembraneous catalytic core and F(0) containing the membrane proton channel, linked together by a central stalk and a peripheral stalk. During catalysis, ATP synthesis in the catalytic domain of F(1) is coupled via a rotary mechanism of the central stalk subunits to proton translocation (By similarity).</text>
</comment>
<comment type="function">
    <text evidence="1">This fusion protein includes a component of the F(0) channel (subunit b) and of the F(1) subunit (subunit delta). Two copies of subunit b and one of delta together form the peripheral 'stator' stalk which links F(1) to F(0) (By similarity).</text>
</comment>
<comment type="subunit">
    <text evidence="1">F-type ATPases have 2 components, F(1) - the catalytic core - and F(0) - the membrane proton channel. F(1) has five subunits: alpha(3), beta(3), gamma(1), delta(1), epsilon(1). F(0) has three main subunits: a(1), b(2) and c(10-14). The alpha and beta chains form an alternating ring which encloses part of the gamma chain. F(1) is attached to F(0) by a central stalk formed by the gamma and epsilon chains, while a peripheral stalk is formed by the delta and b chains (By similarity).</text>
</comment>
<comment type="subcellular location">
    <subcellularLocation>
        <location evidence="1">Cell membrane</location>
        <topology evidence="1">Single-pass membrane protein</topology>
    </subcellularLocation>
</comment>
<comment type="similarity">
    <text evidence="3">In the N-terminal section; belongs to the ATPase B chain family.</text>
</comment>
<comment type="similarity">
    <text evidence="3">In the C-terminal section; belongs to the ATPase delta chain family.</text>
</comment>
<dbReference type="EMBL" id="CP000479">
    <property type="protein sequence ID" value="ABK68040.1"/>
    <property type="molecule type" value="Genomic_DNA"/>
</dbReference>
<dbReference type="RefSeq" id="WP_011724204.1">
    <property type="nucleotide sequence ID" value="NC_008595.1"/>
</dbReference>
<dbReference type="SMR" id="A0QCX5"/>
<dbReference type="KEGG" id="mav:MAV_1524"/>
<dbReference type="HOGENOM" id="CLU_722652_0_0_11"/>
<dbReference type="Proteomes" id="UP000001574">
    <property type="component" value="Chromosome"/>
</dbReference>
<dbReference type="GO" id="GO:0005886">
    <property type="term" value="C:plasma membrane"/>
    <property type="evidence" value="ECO:0007669"/>
    <property type="project" value="UniProtKB-SubCell"/>
</dbReference>
<dbReference type="GO" id="GO:0045259">
    <property type="term" value="C:proton-transporting ATP synthase complex"/>
    <property type="evidence" value="ECO:0007669"/>
    <property type="project" value="UniProtKB-KW"/>
</dbReference>
<dbReference type="GO" id="GO:0046933">
    <property type="term" value="F:proton-transporting ATP synthase activity, rotational mechanism"/>
    <property type="evidence" value="ECO:0007669"/>
    <property type="project" value="UniProtKB-UniRule"/>
</dbReference>
<dbReference type="CDD" id="cd06503">
    <property type="entry name" value="ATP-synt_Fo_b"/>
    <property type="match status" value="1"/>
</dbReference>
<dbReference type="Gene3D" id="1.10.520.20">
    <property type="entry name" value="N-terminal domain of the delta subunit of the F1F0-ATP synthase"/>
    <property type="match status" value="1"/>
</dbReference>
<dbReference type="HAMAP" id="MF_01398">
    <property type="entry name" value="ATP_synth_b_bprime"/>
    <property type="match status" value="1"/>
</dbReference>
<dbReference type="HAMAP" id="MF_01416">
    <property type="entry name" value="ATP_synth_delta_bact"/>
    <property type="match status" value="1"/>
</dbReference>
<dbReference type="InterPro" id="IPR028987">
    <property type="entry name" value="ATP_synth_B-like_membr_sf"/>
</dbReference>
<dbReference type="InterPro" id="IPR002146">
    <property type="entry name" value="ATP_synth_b/b'su_bac/chlpt"/>
</dbReference>
<dbReference type="InterPro" id="IPR005864">
    <property type="entry name" value="ATP_synth_F0_bsu_bac"/>
</dbReference>
<dbReference type="InterPro" id="IPR026015">
    <property type="entry name" value="ATP_synth_OSCP/delta_N_sf"/>
</dbReference>
<dbReference type="InterPro" id="IPR000711">
    <property type="entry name" value="ATPase_OSCP/dsu"/>
</dbReference>
<dbReference type="NCBIfam" id="TIGR01144">
    <property type="entry name" value="ATP_synt_b"/>
    <property type="match status" value="1"/>
</dbReference>
<dbReference type="NCBIfam" id="NF009961">
    <property type="entry name" value="PRK13428.1"/>
    <property type="match status" value="1"/>
</dbReference>
<dbReference type="NCBIfam" id="NF009967">
    <property type="entry name" value="PRK13430.1"/>
    <property type="match status" value="1"/>
</dbReference>
<dbReference type="PANTHER" id="PTHR11910">
    <property type="entry name" value="ATP SYNTHASE DELTA CHAIN"/>
    <property type="match status" value="1"/>
</dbReference>
<dbReference type="Pfam" id="PF00430">
    <property type="entry name" value="ATP-synt_B"/>
    <property type="match status" value="1"/>
</dbReference>
<dbReference type="Pfam" id="PF00213">
    <property type="entry name" value="OSCP"/>
    <property type="match status" value="1"/>
</dbReference>
<dbReference type="PRINTS" id="PR00125">
    <property type="entry name" value="ATPASEDELTA"/>
</dbReference>
<dbReference type="SUPFAM" id="SSF81573">
    <property type="entry name" value="F1F0 ATP synthase subunit B, membrane domain"/>
    <property type="match status" value="1"/>
</dbReference>
<gene>
    <name type="primary">atpFH</name>
    <name type="synonym">atpF</name>
    <name type="synonym">atpH</name>
    <name type="ordered locus">MAV_1524</name>
</gene>
<feature type="chain" id="PRO_0000368887" description="ATP synthase subunit b-delta">
    <location>
        <begin position="1"/>
        <end position="446"/>
    </location>
</feature>
<feature type="transmembrane region" description="Helical" evidence="2">
    <location>
        <begin position="4"/>
        <end position="24"/>
    </location>
</feature>
<feature type="region of interest" description="ATP synthase subunit b">
    <location>
        <begin position="1"/>
        <end position="168"/>
    </location>
</feature>
<feature type="region of interest" description="ATP synthase subunit delta">
    <location>
        <begin position="169"/>
        <end position="446"/>
    </location>
</feature>
<organism>
    <name type="scientific">Mycobacterium avium (strain 104)</name>
    <dbReference type="NCBI Taxonomy" id="243243"/>
    <lineage>
        <taxon>Bacteria</taxon>
        <taxon>Bacillati</taxon>
        <taxon>Actinomycetota</taxon>
        <taxon>Actinomycetes</taxon>
        <taxon>Mycobacteriales</taxon>
        <taxon>Mycobacteriaceae</taxon>
        <taxon>Mycobacterium</taxon>
        <taxon>Mycobacterium avium complex (MAC)</taxon>
    </lineage>
</organism>
<keyword id="KW-0066">ATP synthesis</keyword>
<keyword id="KW-1003">Cell membrane</keyword>
<keyword id="KW-0138">CF(0)</keyword>
<keyword id="KW-0375">Hydrogen ion transport</keyword>
<keyword id="KW-0406">Ion transport</keyword>
<keyword id="KW-0472">Membrane</keyword>
<keyword id="KW-0511">Multifunctional enzyme</keyword>
<keyword id="KW-0812">Transmembrane</keyword>
<keyword id="KW-1133">Transmembrane helix</keyword>
<keyword id="KW-0813">Transport</keyword>
<protein>
    <recommendedName>
        <fullName>ATP synthase subunit b-delta</fullName>
    </recommendedName>
    <domain>
        <recommendedName>
            <fullName>ATP synthase subunit b</fullName>
        </recommendedName>
        <alternativeName>
            <fullName>ATP synthase F(0) sector subunit b 2</fullName>
        </alternativeName>
        <alternativeName>
            <fullName>ATPase subunit I 2</fullName>
        </alternativeName>
        <alternativeName>
            <fullName>F-type ATPase subunit b 2</fullName>
            <shortName>F-ATPase subunit b 2</shortName>
        </alternativeName>
    </domain>
    <domain>
        <recommendedName>
            <fullName>ATP synthase subunit delta</fullName>
        </recommendedName>
        <alternativeName>
            <fullName>ATP synthase F(1) sector subunit delta</fullName>
        </alternativeName>
        <alternativeName>
            <fullName>F-type ATPase subunit delta</fullName>
            <shortName>F-ATPase subunit delta</shortName>
        </alternativeName>
    </domain>
</protein>